<dbReference type="EC" id="2.7.11.1"/>
<dbReference type="EMBL" id="LT708304">
    <property type="protein sequence ID" value="SIU00806.1"/>
    <property type="molecule type" value="Genomic_DNA"/>
</dbReference>
<dbReference type="RefSeq" id="NP_855847.1">
    <property type="nucleotide sequence ID" value="NC_002945.3"/>
</dbReference>
<dbReference type="RefSeq" id="WP_003910517.1">
    <property type="nucleotide sequence ID" value="NC_002945.4"/>
</dbReference>
<dbReference type="SMR" id="Q7TYY6"/>
<dbReference type="KEGG" id="mbo:BQ2027_MB2198"/>
<dbReference type="PATRIC" id="fig|233413.5.peg.2414"/>
<dbReference type="Proteomes" id="UP000001419">
    <property type="component" value="Chromosome"/>
</dbReference>
<dbReference type="GO" id="GO:0005886">
    <property type="term" value="C:plasma membrane"/>
    <property type="evidence" value="ECO:0007669"/>
    <property type="project" value="UniProtKB-SubCell"/>
</dbReference>
<dbReference type="GO" id="GO:0005524">
    <property type="term" value="F:ATP binding"/>
    <property type="evidence" value="ECO:0007669"/>
    <property type="project" value="UniProtKB-KW"/>
</dbReference>
<dbReference type="GO" id="GO:0106310">
    <property type="term" value="F:protein serine kinase activity"/>
    <property type="evidence" value="ECO:0007669"/>
    <property type="project" value="RHEA"/>
</dbReference>
<dbReference type="GO" id="GO:0004674">
    <property type="term" value="F:protein serine/threonine kinase activity"/>
    <property type="evidence" value="ECO:0007669"/>
    <property type="project" value="UniProtKB-KW"/>
</dbReference>
<dbReference type="GO" id="GO:0080090">
    <property type="term" value="P:regulation of primary metabolic process"/>
    <property type="evidence" value="ECO:0007669"/>
    <property type="project" value="UniProtKB-ARBA"/>
</dbReference>
<dbReference type="CDD" id="cd14014">
    <property type="entry name" value="STKc_PknB_like"/>
    <property type="match status" value="1"/>
</dbReference>
<dbReference type="FunFam" id="1.10.510.10:FF:000021">
    <property type="entry name" value="Serine/threonine protein kinase"/>
    <property type="match status" value="1"/>
</dbReference>
<dbReference type="FunFam" id="3.30.200.20:FF:000035">
    <property type="entry name" value="Serine/threonine protein kinase Stk1"/>
    <property type="match status" value="1"/>
</dbReference>
<dbReference type="Gene3D" id="3.30.200.20">
    <property type="entry name" value="Phosphorylase Kinase, domain 1"/>
    <property type="match status" value="1"/>
</dbReference>
<dbReference type="Gene3D" id="1.10.510.10">
    <property type="entry name" value="Transferase(Phosphotransferase) domain 1"/>
    <property type="match status" value="1"/>
</dbReference>
<dbReference type="InterPro" id="IPR011009">
    <property type="entry name" value="Kinase-like_dom_sf"/>
</dbReference>
<dbReference type="InterPro" id="IPR000719">
    <property type="entry name" value="Prot_kinase_dom"/>
</dbReference>
<dbReference type="InterPro" id="IPR008271">
    <property type="entry name" value="Ser/Thr_kinase_AS"/>
</dbReference>
<dbReference type="PANTHER" id="PTHR43289">
    <property type="entry name" value="MITOGEN-ACTIVATED PROTEIN KINASE KINASE KINASE 20-RELATED"/>
    <property type="match status" value="1"/>
</dbReference>
<dbReference type="PANTHER" id="PTHR43289:SF34">
    <property type="entry name" value="SERINE_THREONINE-PROTEIN KINASE YBDM-RELATED"/>
    <property type="match status" value="1"/>
</dbReference>
<dbReference type="Pfam" id="PF00069">
    <property type="entry name" value="Pkinase"/>
    <property type="match status" value="1"/>
</dbReference>
<dbReference type="SMART" id="SM00220">
    <property type="entry name" value="S_TKc"/>
    <property type="match status" value="1"/>
</dbReference>
<dbReference type="SUPFAM" id="SSF56112">
    <property type="entry name" value="Protein kinase-like (PK-like)"/>
    <property type="match status" value="1"/>
</dbReference>
<dbReference type="PROSITE" id="PS50011">
    <property type="entry name" value="PROTEIN_KINASE_DOM"/>
    <property type="match status" value="1"/>
</dbReference>
<dbReference type="PROSITE" id="PS00108">
    <property type="entry name" value="PROTEIN_KINASE_ST"/>
    <property type="match status" value="1"/>
</dbReference>
<proteinExistence type="inferred from homology"/>
<gene>
    <name type="primary">pknL</name>
    <name type="ordered locus">BQ2027_MB2198</name>
</gene>
<name>PKNL_MYCBO</name>
<organism>
    <name type="scientific">Mycobacterium bovis (strain ATCC BAA-935 / AF2122/97)</name>
    <dbReference type="NCBI Taxonomy" id="233413"/>
    <lineage>
        <taxon>Bacteria</taxon>
        <taxon>Bacillati</taxon>
        <taxon>Actinomycetota</taxon>
        <taxon>Actinomycetes</taxon>
        <taxon>Mycobacteriales</taxon>
        <taxon>Mycobacteriaceae</taxon>
        <taxon>Mycobacterium</taxon>
        <taxon>Mycobacterium tuberculosis complex</taxon>
    </lineage>
</organism>
<accession>Q7TYY6</accession>
<accession>A0A1R3Y0I5</accession>
<accession>X2BJJ4</accession>
<protein>
    <recommendedName>
        <fullName>Serine/threonine-protein kinase PknL</fullName>
        <ecNumber>2.7.11.1</ecNumber>
    </recommendedName>
</protein>
<comment type="catalytic activity">
    <reaction>
        <text>L-seryl-[protein] + ATP = O-phospho-L-seryl-[protein] + ADP + H(+)</text>
        <dbReference type="Rhea" id="RHEA:17989"/>
        <dbReference type="Rhea" id="RHEA-COMP:9863"/>
        <dbReference type="Rhea" id="RHEA-COMP:11604"/>
        <dbReference type="ChEBI" id="CHEBI:15378"/>
        <dbReference type="ChEBI" id="CHEBI:29999"/>
        <dbReference type="ChEBI" id="CHEBI:30616"/>
        <dbReference type="ChEBI" id="CHEBI:83421"/>
        <dbReference type="ChEBI" id="CHEBI:456216"/>
        <dbReference type="EC" id="2.7.11.1"/>
    </reaction>
</comment>
<comment type="catalytic activity">
    <reaction>
        <text>L-threonyl-[protein] + ATP = O-phospho-L-threonyl-[protein] + ADP + H(+)</text>
        <dbReference type="Rhea" id="RHEA:46608"/>
        <dbReference type="Rhea" id="RHEA-COMP:11060"/>
        <dbReference type="Rhea" id="RHEA-COMP:11605"/>
        <dbReference type="ChEBI" id="CHEBI:15378"/>
        <dbReference type="ChEBI" id="CHEBI:30013"/>
        <dbReference type="ChEBI" id="CHEBI:30616"/>
        <dbReference type="ChEBI" id="CHEBI:61977"/>
        <dbReference type="ChEBI" id="CHEBI:456216"/>
        <dbReference type="EC" id="2.7.11.1"/>
    </reaction>
</comment>
<comment type="subcellular location">
    <subcellularLocation>
        <location evidence="6">Cell membrane</location>
        <topology evidence="6">Single-pass membrane protein</topology>
    </subcellularLocation>
</comment>
<comment type="PTM">
    <text evidence="1">Autophosphorylated.</text>
</comment>
<comment type="similarity">
    <text evidence="3">Belongs to the protein kinase superfamily. Ser/Thr protein kinase family.</text>
</comment>
<feature type="chain" id="PRO_0000171225" description="Serine/threonine-protein kinase PknL">
    <location>
        <begin position="1"/>
        <end position="399"/>
    </location>
</feature>
<feature type="topological domain" description="Cytoplasmic" evidence="2">
    <location>
        <begin position="1"/>
        <end position="368"/>
    </location>
</feature>
<feature type="transmembrane region" description="Helical" evidence="2">
    <location>
        <begin position="369"/>
        <end position="389"/>
    </location>
</feature>
<feature type="topological domain" description="Extracellular" evidence="2">
    <location>
        <begin position="390"/>
        <end position="399"/>
    </location>
</feature>
<feature type="domain" description="Protein kinase" evidence="3">
    <location>
        <begin position="19"/>
        <end position="278"/>
    </location>
</feature>
<feature type="region of interest" description="Disordered" evidence="5">
    <location>
        <begin position="312"/>
        <end position="346"/>
    </location>
</feature>
<feature type="active site" description="Proton acceptor" evidence="3 4">
    <location>
        <position position="142"/>
    </location>
</feature>
<feature type="binding site" evidence="3">
    <location>
        <begin position="25"/>
        <end position="33"/>
    </location>
    <ligand>
        <name>ATP</name>
        <dbReference type="ChEBI" id="CHEBI:30616"/>
    </ligand>
</feature>
<feature type="binding site" evidence="3">
    <location>
        <position position="48"/>
    </location>
    <ligand>
        <name>ATP</name>
        <dbReference type="ChEBI" id="CHEBI:30616"/>
    </ligand>
</feature>
<sequence length="399" mass="42818">MVEAGTRDPLESALLDSRYLVQAKIASGGTSTVYRGLDVRLDRPVALKVMDARYAGDEQFLTRFRLEARAVARLNNRALVAVYDQGKDGRHPFLVMELIEGGTLRELLIERGPMPPHAVVAVLRPVLGGLAAAHRAGLVHRDVKPENILISDDGDVKLADFGLVRAVAAASITSTGVILGTAAYLSPEQVRDGNADPRSDVYSVGVLVYELLTGHTPFTGDSALSIAYQRLDADVPRASAVIDGVPPQFDELVACATARNPADRYADAIAMGADLEAIAEELALPEFRVPAPRNSAQHRSAALYRSRITQQGQLGAKPVHHPTRQLTRQPGDCSEPASGSEPEHEPITGQFAGIAIEEFIWARQHARRMVLVWVSVVLAITGLVASAAWTIGSNLSGLL</sequence>
<keyword id="KW-0067">ATP-binding</keyword>
<keyword id="KW-1003">Cell membrane</keyword>
<keyword id="KW-0418">Kinase</keyword>
<keyword id="KW-0472">Membrane</keyword>
<keyword id="KW-0547">Nucleotide-binding</keyword>
<keyword id="KW-0597">Phosphoprotein</keyword>
<keyword id="KW-1185">Reference proteome</keyword>
<keyword id="KW-0723">Serine/threonine-protein kinase</keyword>
<keyword id="KW-0808">Transferase</keyword>
<keyword id="KW-0812">Transmembrane</keyword>
<keyword id="KW-1133">Transmembrane helix</keyword>
<reference key="1">
    <citation type="journal article" date="2003" name="Proc. Natl. Acad. Sci. U.S.A.">
        <title>The complete genome sequence of Mycobacterium bovis.</title>
        <authorList>
            <person name="Garnier T."/>
            <person name="Eiglmeier K."/>
            <person name="Camus J.-C."/>
            <person name="Medina N."/>
            <person name="Mansoor H."/>
            <person name="Pryor M."/>
            <person name="Duthoy S."/>
            <person name="Grondin S."/>
            <person name="Lacroix C."/>
            <person name="Monsempe C."/>
            <person name="Simon S."/>
            <person name="Harris B."/>
            <person name="Atkin R."/>
            <person name="Doggett J."/>
            <person name="Mayes R."/>
            <person name="Keating L."/>
            <person name="Wheeler P.R."/>
            <person name="Parkhill J."/>
            <person name="Barrell B.G."/>
            <person name="Cole S.T."/>
            <person name="Gordon S.V."/>
            <person name="Hewinson R.G."/>
        </authorList>
    </citation>
    <scope>NUCLEOTIDE SEQUENCE [LARGE SCALE GENOMIC DNA]</scope>
    <source>
        <strain>ATCC BAA-935 / AF2122/97</strain>
    </source>
</reference>
<reference key="2">
    <citation type="journal article" date="2017" name="Genome Announc.">
        <title>Updated reference genome sequence and annotation of Mycobacterium bovis AF2122/97.</title>
        <authorList>
            <person name="Malone K.M."/>
            <person name="Farrell D."/>
            <person name="Stuber T.P."/>
            <person name="Schubert O.T."/>
            <person name="Aebersold R."/>
            <person name="Robbe-Austerman S."/>
            <person name="Gordon S.V."/>
        </authorList>
    </citation>
    <scope>NUCLEOTIDE SEQUENCE [LARGE SCALE GENOMIC DNA]</scope>
    <scope>GENOME REANNOTATION</scope>
    <source>
        <strain>ATCC BAA-935 / AF2122/97</strain>
    </source>
</reference>
<evidence type="ECO:0000250" key="1"/>
<evidence type="ECO:0000255" key="2"/>
<evidence type="ECO:0000255" key="3">
    <source>
        <dbReference type="PROSITE-ProRule" id="PRU00159"/>
    </source>
</evidence>
<evidence type="ECO:0000255" key="4">
    <source>
        <dbReference type="PROSITE-ProRule" id="PRU10027"/>
    </source>
</evidence>
<evidence type="ECO:0000256" key="5">
    <source>
        <dbReference type="SAM" id="MobiDB-lite"/>
    </source>
</evidence>
<evidence type="ECO:0000305" key="6"/>